<accession>B9DUS7</accession>
<comment type="function">
    <text evidence="1">Catalyzes the conversion of dihydroorotate to orotate with fumarate as the electron acceptor.</text>
</comment>
<comment type="catalytic activity">
    <reaction>
        <text>(S)-dihydroorotate + fumarate = orotate + succinate</text>
        <dbReference type="Rhea" id="RHEA:30059"/>
        <dbReference type="ChEBI" id="CHEBI:29806"/>
        <dbReference type="ChEBI" id="CHEBI:30031"/>
        <dbReference type="ChEBI" id="CHEBI:30839"/>
        <dbReference type="ChEBI" id="CHEBI:30864"/>
        <dbReference type="EC" id="1.3.98.1"/>
    </reaction>
</comment>
<comment type="cofactor">
    <cofactor evidence="1">
        <name>FMN</name>
        <dbReference type="ChEBI" id="CHEBI:58210"/>
    </cofactor>
    <text evidence="1">Binds 1 FMN per subunit.</text>
</comment>
<comment type="pathway">
    <text>Pyrimidine metabolism; UMP biosynthesis via de novo pathway.</text>
</comment>
<comment type="subunit">
    <text evidence="1">Homodimer.</text>
</comment>
<comment type="subcellular location">
    <subcellularLocation>
        <location evidence="1">Cytoplasm</location>
    </subcellularLocation>
</comment>
<comment type="similarity">
    <text evidence="2">Belongs to the dihydroorotate dehydrogenase family. Type 1 subfamily.</text>
</comment>
<proteinExistence type="inferred from homology"/>
<gene>
    <name type="primary">pyrD</name>
    <name type="ordered locus">SUB1264</name>
</gene>
<organism>
    <name type="scientific">Streptococcus uberis (strain ATCC BAA-854 / 0140J)</name>
    <dbReference type="NCBI Taxonomy" id="218495"/>
    <lineage>
        <taxon>Bacteria</taxon>
        <taxon>Bacillati</taxon>
        <taxon>Bacillota</taxon>
        <taxon>Bacilli</taxon>
        <taxon>Lactobacillales</taxon>
        <taxon>Streptococcaceae</taxon>
        <taxon>Streptococcus</taxon>
    </lineage>
</organism>
<sequence>MVSTATQIAGFNFDNCLMNAAGVYCMSKEELLEIETSAAGSFVTKTGTLEAREGNPEPRYAPTPLGSINSMGLPNMGYDYYLDVVLDLEKEENSKNHFISVVGLSPEDTHTILKTLHSSAYQGLVELNLSCPNVPGKPQIAYDFETTEQLLTEIFSYYTKPLGVKLPPYFDIVHFDQAAAIFNKFPLAFVNSVNSIGNGLVIDDETVIIKPKNGFGGIGGDYIKPTALANVHAFYQRLNPSIQIIGTGGVKSGRDAFEHILCGASMVQIGTALQEEGPEIFTRITEELKQIMVEKGYQRLDDFRGKLHYLD</sequence>
<dbReference type="EC" id="1.3.98.1"/>
<dbReference type="EMBL" id="AM946015">
    <property type="protein sequence ID" value="CAR42755.1"/>
    <property type="molecule type" value="Genomic_DNA"/>
</dbReference>
<dbReference type="RefSeq" id="WP_012658738.1">
    <property type="nucleotide sequence ID" value="NC_012004.1"/>
</dbReference>
<dbReference type="SMR" id="B9DUS7"/>
<dbReference type="STRING" id="218495.SUB1264"/>
<dbReference type="KEGG" id="sub:SUB1264"/>
<dbReference type="eggNOG" id="COG0167">
    <property type="taxonomic scope" value="Bacteria"/>
</dbReference>
<dbReference type="HOGENOM" id="CLU_042042_3_0_9"/>
<dbReference type="OrthoDB" id="9794954at2"/>
<dbReference type="UniPathway" id="UPA00070"/>
<dbReference type="Proteomes" id="UP000000449">
    <property type="component" value="Chromosome"/>
</dbReference>
<dbReference type="GO" id="GO:0005737">
    <property type="term" value="C:cytoplasm"/>
    <property type="evidence" value="ECO:0007669"/>
    <property type="project" value="UniProtKB-SubCell"/>
</dbReference>
<dbReference type="GO" id="GO:1990663">
    <property type="term" value="F:dihydroorotate dehydrogenase (fumarate) activity"/>
    <property type="evidence" value="ECO:0007669"/>
    <property type="project" value="UniProtKB-EC"/>
</dbReference>
<dbReference type="GO" id="GO:0006207">
    <property type="term" value="P:'de novo' pyrimidine nucleobase biosynthetic process"/>
    <property type="evidence" value="ECO:0007669"/>
    <property type="project" value="InterPro"/>
</dbReference>
<dbReference type="GO" id="GO:0044205">
    <property type="term" value="P:'de novo' UMP biosynthetic process"/>
    <property type="evidence" value="ECO:0007669"/>
    <property type="project" value="UniProtKB-UniRule"/>
</dbReference>
<dbReference type="CDD" id="cd04741">
    <property type="entry name" value="DHOD_1A_like"/>
    <property type="match status" value="1"/>
</dbReference>
<dbReference type="FunFam" id="3.20.20.70:FF:000027">
    <property type="entry name" value="Dihydropyrimidine dehydrogenase [NADP(+)]"/>
    <property type="match status" value="1"/>
</dbReference>
<dbReference type="Gene3D" id="3.20.20.70">
    <property type="entry name" value="Aldolase class I"/>
    <property type="match status" value="1"/>
</dbReference>
<dbReference type="HAMAP" id="MF_00224">
    <property type="entry name" value="DHO_dh_type1"/>
    <property type="match status" value="1"/>
</dbReference>
<dbReference type="InterPro" id="IPR013785">
    <property type="entry name" value="Aldolase_TIM"/>
</dbReference>
<dbReference type="InterPro" id="IPR050074">
    <property type="entry name" value="DHO_dehydrogenase"/>
</dbReference>
<dbReference type="InterPro" id="IPR033886">
    <property type="entry name" value="DHOD_1A"/>
</dbReference>
<dbReference type="InterPro" id="IPR024920">
    <property type="entry name" value="Dihydroorotate_DH_1"/>
</dbReference>
<dbReference type="InterPro" id="IPR012135">
    <property type="entry name" value="Dihydroorotate_DH_1_2"/>
</dbReference>
<dbReference type="InterPro" id="IPR005720">
    <property type="entry name" value="Dihydroorotate_DH_cat"/>
</dbReference>
<dbReference type="InterPro" id="IPR001295">
    <property type="entry name" value="Dihydroorotate_DH_CS"/>
</dbReference>
<dbReference type="NCBIfam" id="NF002702">
    <property type="entry name" value="PRK02506.1"/>
    <property type="match status" value="1"/>
</dbReference>
<dbReference type="PANTHER" id="PTHR48109:SF1">
    <property type="entry name" value="DIHYDROOROTATE DEHYDROGENASE (FUMARATE)"/>
    <property type="match status" value="1"/>
</dbReference>
<dbReference type="PANTHER" id="PTHR48109">
    <property type="entry name" value="DIHYDROOROTATE DEHYDROGENASE (QUINONE), MITOCHONDRIAL-RELATED"/>
    <property type="match status" value="1"/>
</dbReference>
<dbReference type="Pfam" id="PF01180">
    <property type="entry name" value="DHO_dh"/>
    <property type="match status" value="1"/>
</dbReference>
<dbReference type="PIRSF" id="PIRSF000164">
    <property type="entry name" value="DHO_oxidase"/>
    <property type="match status" value="1"/>
</dbReference>
<dbReference type="SUPFAM" id="SSF51395">
    <property type="entry name" value="FMN-linked oxidoreductases"/>
    <property type="match status" value="1"/>
</dbReference>
<dbReference type="PROSITE" id="PS00912">
    <property type="entry name" value="DHODEHASE_2"/>
    <property type="match status" value="1"/>
</dbReference>
<evidence type="ECO:0000250" key="1"/>
<evidence type="ECO:0000305" key="2"/>
<reference key="1">
    <citation type="journal article" date="2009" name="BMC Genomics">
        <title>Evidence for niche adaptation in the genome of the bovine pathogen Streptococcus uberis.</title>
        <authorList>
            <person name="Ward P.N."/>
            <person name="Holden M.T.G."/>
            <person name="Leigh J.A."/>
            <person name="Lennard N."/>
            <person name="Bignell A."/>
            <person name="Barron A."/>
            <person name="Clark L."/>
            <person name="Quail M.A."/>
            <person name="Woodward J."/>
            <person name="Barrell B.G."/>
            <person name="Egan S.A."/>
            <person name="Field T.R."/>
            <person name="Maskell D."/>
            <person name="Kehoe M."/>
            <person name="Dowson C.G."/>
            <person name="Chanter N."/>
            <person name="Whatmore A.M."/>
            <person name="Bentley S.D."/>
            <person name="Parkhill J."/>
        </authorList>
    </citation>
    <scope>NUCLEOTIDE SEQUENCE [LARGE SCALE GENOMIC DNA]</scope>
    <source>
        <strain>ATCC BAA-854 / 0140J</strain>
    </source>
</reference>
<protein>
    <recommendedName>
        <fullName>Putative dihydroorotate dehydrogenase A (fumarate)</fullName>
        <shortName>DHOD A</shortName>
        <shortName>DHODase A</shortName>
        <shortName>DHOdehase A</shortName>
        <ecNumber>1.3.98.1</ecNumber>
    </recommendedName>
</protein>
<name>PYRDA_STRU0</name>
<keyword id="KW-0963">Cytoplasm</keyword>
<keyword id="KW-0285">Flavoprotein</keyword>
<keyword id="KW-0288">FMN</keyword>
<keyword id="KW-0560">Oxidoreductase</keyword>
<keyword id="KW-0665">Pyrimidine biosynthesis</keyword>
<keyword id="KW-1185">Reference proteome</keyword>
<feature type="chain" id="PRO_1000195053" description="Putative dihydroorotate dehydrogenase A (fumarate)">
    <location>
        <begin position="1"/>
        <end position="311"/>
    </location>
</feature>
<feature type="active site" description="Nucleophile">
    <location>
        <position position="131"/>
    </location>
</feature>
<feature type="binding site" evidence="1">
    <location>
        <begin position="45"/>
        <end position="46"/>
    </location>
    <ligand>
        <name>FMN</name>
        <dbReference type="ChEBI" id="CHEBI:58210"/>
    </ligand>
</feature>
<feature type="binding site" evidence="1">
    <location>
        <position position="45"/>
    </location>
    <ligand>
        <name>substrate</name>
    </ligand>
</feature>
<feature type="binding site" evidence="1">
    <location>
        <begin position="69"/>
        <end position="73"/>
    </location>
    <ligand>
        <name>substrate</name>
    </ligand>
</feature>
<feature type="binding site" evidence="1">
    <location>
        <position position="128"/>
    </location>
    <ligand>
        <name>FMN</name>
        <dbReference type="ChEBI" id="CHEBI:58210"/>
    </ligand>
</feature>
<feature type="binding site" evidence="1">
    <location>
        <position position="128"/>
    </location>
    <ligand>
        <name>substrate</name>
    </ligand>
</feature>
<feature type="binding site" evidence="1">
    <location>
        <position position="165"/>
    </location>
    <ligand>
        <name>FMN</name>
        <dbReference type="ChEBI" id="CHEBI:58210"/>
    </ligand>
</feature>
<feature type="binding site" evidence="1">
    <location>
        <position position="193"/>
    </location>
    <ligand>
        <name>FMN</name>
        <dbReference type="ChEBI" id="CHEBI:58210"/>
    </ligand>
</feature>
<feature type="binding site" evidence="1">
    <location>
        <begin position="194"/>
        <end position="195"/>
    </location>
    <ligand>
        <name>substrate</name>
    </ligand>
</feature>
<feature type="binding site" evidence="1">
    <location>
        <position position="220"/>
    </location>
    <ligand>
        <name>FMN</name>
        <dbReference type="ChEBI" id="CHEBI:58210"/>
    </ligand>
</feature>
<feature type="binding site" evidence="1">
    <location>
        <begin position="248"/>
        <end position="249"/>
    </location>
    <ligand>
        <name>FMN</name>
        <dbReference type="ChEBI" id="CHEBI:58210"/>
    </ligand>
</feature>
<feature type="binding site" evidence="1">
    <location>
        <begin position="270"/>
        <end position="271"/>
    </location>
    <ligand>
        <name>FMN</name>
        <dbReference type="ChEBI" id="CHEBI:58210"/>
    </ligand>
</feature>